<name>TYSY1_BACSH</name>
<feature type="chain" id="PRO_0000403664" description="Thymidylate synthase 1">
    <location>
        <begin position="1"/>
        <end position="279"/>
    </location>
</feature>
<feature type="active site" description="Nucleophile" evidence="1">
    <location>
        <position position="161"/>
    </location>
</feature>
<feature type="binding site" evidence="1">
    <location>
        <begin position="141"/>
        <end position="142"/>
    </location>
    <ligand>
        <name>dUMP</name>
        <dbReference type="ChEBI" id="CHEBI:246422"/>
        <note>ligand shared between dimeric partners</note>
    </ligand>
</feature>
<feature type="binding site" description="in other chain" evidence="1">
    <location>
        <begin position="181"/>
        <end position="184"/>
    </location>
    <ligand>
        <name>dUMP</name>
        <dbReference type="ChEBI" id="CHEBI:246422"/>
        <note>ligand shared between dimeric partners</note>
    </ligand>
</feature>
<feature type="binding site" evidence="1">
    <location>
        <position position="184"/>
    </location>
    <ligand>
        <name>(6R)-5,10-methylene-5,6,7,8-tetrahydrofolate</name>
        <dbReference type="ChEBI" id="CHEBI:15636"/>
    </ligand>
</feature>
<feature type="binding site" description="in other chain" evidence="1">
    <location>
        <position position="192"/>
    </location>
    <ligand>
        <name>dUMP</name>
        <dbReference type="ChEBI" id="CHEBI:246422"/>
        <note>ligand shared between dimeric partners</note>
    </ligand>
</feature>
<feature type="binding site" description="in other chain" evidence="1">
    <location>
        <begin position="222"/>
        <end position="224"/>
    </location>
    <ligand>
        <name>dUMP</name>
        <dbReference type="ChEBI" id="CHEBI:246422"/>
        <note>ligand shared between dimeric partners</note>
    </ligand>
</feature>
<feature type="binding site" evidence="1">
    <location>
        <position position="278"/>
    </location>
    <ligand>
        <name>(6R)-5,10-methylene-5,6,7,8-tetrahydrofolate</name>
        <dbReference type="ChEBI" id="CHEBI:15636"/>
    </ligand>
</feature>
<feature type="sequence conflict" description="In Ref. 2; AAC26325." evidence="3" ref="2">
    <original>N</original>
    <variation>S</variation>
    <location>
        <position position="149"/>
    </location>
</feature>
<gene>
    <name evidence="1" type="primary">thyA1</name>
    <name type="synonym">thyA</name>
    <name type="ordered locus">BSUW23_09080</name>
</gene>
<keyword id="KW-0963">Cytoplasm</keyword>
<keyword id="KW-0489">Methyltransferase</keyword>
<keyword id="KW-0545">Nucleotide biosynthesis</keyword>
<keyword id="KW-0808">Transferase</keyword>
<accession>E0TVT6</accession>
<accession>O30395</accession>
<accession>O30396</accession>
<accession>P42326</accession>
<proteinExistence type="inferred from homology"/>
<comment type="function">
    <text evidence="1">Catalyzes the reductive methylation of 2'-deoxyuridine-5'-monophosphate (dUMP) to 2'-deoxythymidine-5'-monophosphate (dTMP) while utilizing 5,10-methylenetetrahydrofolate (mTHF) as the methyl donor and reductant in the reaction, yielding dihydrofolate (DHF) as a by-product. This enzymatic reaction provides an intracellular de novo source of dTMP, an essential precursor for DNA biosynthesis.</text>
</comment>
<comment type="catalytic activity">
    <reaction evidence="1">
        <text>dUMP + (6R)-5,10-methylene-5,6,7,8-tetrahydrofolate = 7,8-dihydrofolate + dTMP</text>
        <dbReference type="Rhea" id="RHEA:12104"/>
        <dbReference type="ChEBI" id="CHEBI:15636"/>
        <dbReference type="ChEBI" id="CHEBI:57451"/>
        <dbReference type="ChEBI" id="CHEBI:63528"/>
        <dbReference type="ChEBI" id="CHEBI:246422"/>
        <dbReference type="EC" id="2.1.1.45"/>
    </reaction>
</comment>
<comment type="pathway">
    <text evidence="1">Pyrimidine metabolism; dTTP biosynthesis.</text>
</comment>
<comment type="subunit">
    <text evidence="1">Homodimer.</text>
</comment>
<comment type="subcellular location">
    <subcellularLocation>
        <location evidence="1">Cytoplasm</location>
    </subcellularLocation>
</comment>
<comment type="similarity">
    <text evidence="1">Belongs to the thymidylate synthase family. Bacterial-type ThyA subfamily.</text>
</comment>
<evidence type="ECO:0000255" key="1">
    <source>
        <dbReference type="HAMAP-Rule" id="MF_00008"/>
    </source>
</evidence>
<evidence type="ECO:0000303" key="2">
    <source>
    </source>
</evidence>
<evidence type="ECO:0000305" key="3"/>
<sequence length="279" mass="32890">MTQFDKQYNSIIKDIMNNGISDEEFNVRTKWDSDGTPAHTLSVISKQMRFDNSEVPILTTKKVAWKTAIKELLWIWQLKSNDVTELNKMGVHIWDQWKQEDGTIGHAYGFQLGKKNRNLNGEKVDQVDYLLHQLKNNPSSRRHITMLWNPDELDSMALTPCVYETQWYVKQGKLHLEVRARSNDMALGNPFNVFQYNVLQRMIAQVTGYELGEYIFNIGDCHVYTRHIDNLKIQMEREQFEAPELWINPEVKDFYDFTIDDFKLFNYKHGDKLLFEVAV</sequence>
<organism>
    <name type="scientific">Bacillus spizizenii (strain ATCC 23059 / NRRL B-14472 / W23)</name>
    <name type="common">Bacillus subtilis subsp. spizizenii</name>
    <dbReference type="NCBI Taxonomy" id="655816"/>
    <lineage>
        <taxon>Bacteria</taxon>
        <taxon>Bacillati</taxon>
        <taxon>Bacillota</taxon>
        <taxon>Bacilli</taxon>
        <taxon>Bacillales</taxon>
        <taxon>Bacillaceae</taxon>
        <taxon>Bacillus</taxon>
    </lineage>
</organism>
<dbReference type="EC" id="2.1.1.45" evidence="1"/>
<dbReference type="EMBL" id="CP002183">
    <property type="protein sequence ID" value="ADM37862.1"/>
    <property type="molecule type" value="Genomic_DNA"/>
</dbReference>
<dbReference type="EMBL" id="AF004103">
    <property type="protein sequence ID" value="AAC26325.1"/>
    <property type="molecule type" value="Genomic_DNA"/>
</dbReference>
<dbReference type="PIR" id="I40494">
    <property type="entry name" value="I40494"/>
</dbReference>
<dbReference type="RefSeq" id="WP_003221167.1">
    <property type="nucleotide sequence ID" value="NZ_CP148102.1"/>
</dbReference>
<dbReference type="SMR" id="E0TVT6"/>
<dbReference type="KEGG" id="bss:BSUW23_09080"/>
<dbReference type="HOGENOM" id="CLU_021669_0_0_9"/>
<dbReference type="UniPathway" id="UPA00575"/>
<dbReference type="Proteomes" id="UP000002233">
    <property type="component" value="Chromosome"/>
</dbReference>
<dbReference type="GO" id="GO:0005829">
    <property type="term" value="C:cytosol"/>
    <property type="evidence" value="ECO:0007669"/>
    <property type="project" value="TreeGrafter"/>
</dbReference>
<dbReference type="GO" id="GO:0004799">
    <property type="term" value="F:thymidylate synthase activity"/>
    <property type="evidence" value="ECO:0007669"/>
    <property type="project" value="UniProtKB-UniRule"/>
</dbReference>
<dbReference type="GO" id="GO:0006231">
    <property type="term" value="P:dTMP biosynthetic process"/>
    <property type="evidence" value="ECO:0007669"/>
    <property type="project" value="UniProtKB-UniRule"/>
</dbReference>
<dbReference type="GO" id="GO:0006235">
    <property type="term" value="P:dTTP biosynthetic process"/>
    <property type="evidence" value="ECO:0007669"/>
    <property type="project" value="UniProtKB-UniRule"/>
</dbReference>
<dbReference type="GO" id="GO:0032259">
    <property type="term" value="P:methylation"/>
    <property type="evidence" value="ECO:0007669"/>
    <property type="project" value="UniProtKB-KW"/>
</dbReference>
<dbReference type="CDD" id="cd00351">
    <property type="entry name" value="TS_Pyrimidine_HMase"/>
    <property type="match status" value="1"/>
</dbReference>
<dbReference type="FunFam" id="3.30.572.10:FF:000010">
    <property type="entry name" value="Thymidylate synthase 1"/>
    <property type="match status" value="1"/>
</dbReference>
<dbReference type="Gene3D" id="3.30.572.10">
    <property type="entry name" value="Thymidylate synthase/dCMP hydroxymethylase domain"/>
    <property type="match status" value="1"/>
</dbReference>
<dbReference type="HAMAP" id="MF_00008">
    <property type="entry name" value="Thymidy_synth_bact"/>
    <property type="match status" value="1"/>
</dbReference>
<dbReference type="InterPro" id="IPR045097">
    <property type="entry name" value="Thymidate_synth/dCMP_Mease"/>
</dbReference>
<dbReference type="InterPro" id="IPR023451">
    <property type="entry name" value="Thymidate_synth/dCMP_Mease_dom"/>
</dbReference>
<dbReference type="InterPro" id="IPR036926">
    <property type="entry name" value="Thymidate_synth/dCMP_Mease_sf"/>
</dbReference>
<dbReference type="InterPro" id="IPR000398">
    <property type="entry name" value="Thymidylate_synthase"/>
</dbReference>
<dbReference type="InterPro" id="IPR020940">
    <property type="entry name" value="Thymidylate_synthase_AS"/>
</dbReference>
<dbReference type="NCBIfam" id="NF002495">
    <property type="entry name" value="PRK01827.1-1"/>
    <property type="match status" value="1"/>
</dbReference>
<dbReference type="NCBIfam" id="TIGR03284">
    <property type="entry name" value="thym_sym"/>
    <property type="match status" value="1"/>
</dbReference>
<dbReference type="PANTHER" id="PTHR11548">
    <property type="entry name" value="THYMIDYLATE SYNTHASE 1"/>
    <property type="match status" value="1"/>
</dbReference>
<dbReference type="PANTHER" id="PTHR11548:SF1">
    <property type="entry name" value="THYMIDYLATE SYNTHASE 1"/>
    <property type="match status" value="1"/>
</dbReference>
<dbReference type="Pfam" id="PF00303">
    <property type="entry name" value="Thymidylat_synt"/>
    <property type="match status" value="1"/>
</dbReference>
<dbReference type="PRINTS" id="PR00108">
    <property type="entry name" value="THYMDSNTHASE"/>
</dbReference>
<dbReference type="SUPFAM" id="SSF55831">
    <property type="entry name" value="Thymidylate synthase/dCMP hydroxymethylase"/>
    <property type="match status" value="1"/>
</dbReference>
<dbReference type="PROSITE" id="PS00091">
    <property type="entry name" value="THYMIDYLATE_SYNTHASE"/>
    <property type="match status" value="1"/>
</dbReference>
<reference key="1">
    <citation type="journal article" date="2011" name="Microbiology">
        <title>The genome sequence of Bacillus subtilis subsp. spizizenii W23: insights into speciation within the B. subtilis complex and into the history of B. subtilis genetics.</title>
        <authorList>
            <person name="Zeigler D.R."/>
        </authorList>
    </citation>
    <scope>NUCLEOTIDE SEQUENCE [LARGE SCALE GENOMIC DNA]</scope>
    <source>
        <strain>ATCC 23059 / NRRL B-14472 / W23</strain>
    </source>
</reference>
<reference key="2">
    <citation type="journal article" date="1998" name="Mol. Gen. Genet.">
        <title>Genes encoding thymidylate synthases A and B in the genus Bacillus are members of two distinct families.</title>
        <authorList>
            <person name="Tam N.H."/>
            <person name="Borriss R."/>
        </authorList>
    </citation>
    <scope>NUCLEOTIDE SEQUENCE [GENOMIC DNA] OF 50-279</scope>
    <source>
        <strain>ATCC 23059 / NRRL B-14472 / W23</strain>
    </source>
</reference>
<protein>
    <recommendedName>
        <fullName evidence="1">Thymidylate synthase 1</fullName>
        <shortName evidence="1">TS 1</shortName>
        <shortName evidence="1">TSase 1</shortName>
        <ecNumber evidence="1">2.1.1.45</ecNumber>
    </recommendedName>
    <alternativeName>
        <fullName evidence="2">Thymidylate synthase A</fullName>
        <shortName evidence="2">TS A</shortName>
        <shortName evidence="2">TSase A</shortName>
    </alternativeName>
</protein>